<dbReference type="EMBL" id="CP001359">
    <property type="protein sequence ID" value="ACL65370.1"/>
    <property type="molecule type" value="Genomic_DNA"/>
</dbReference>
<dbReference type="RefSeq" id="WP_012633249.1">
    <property type="nucleotide sequence ID" value="NC_011891.1"/>
</dbReference>
<dbReference type="SMR" id="B8J871"/>
<dbReference type="KEGG" id="acp:A2cp1_2029"/>
<dbReference type="HOGENOM" id="CLU_093315_2_3_7"/>
<dbReference type="Proteomes" id="UP000007089">
    <property type="component" value="Chromosome"/>
</dbReference>
<dbReference type="GO" id="GO:1990904">
    <property type="term" value="C:ribonucleoprotein complex"/>
    <property type="evidence" value="ECO:0007669"/>
    <property type="project" value="UniProtKB-KW"/>
</dbReference>
<dbReference type="GO" id="GO:0005840">
    <property type="term" value="C:ribosome"/>
    <property type="evidence" value="ECO:0007669"/>
    <property type="project" value="UniProtKB-KW"/>
</dbReference>
<dbReference type="GO" id="GO:0019843">
    <property type="term" value="F:rRNA binding"/>
    <property type="evidence" value="ECO:0007669"/>
    <property type="project" value="UniProtKB-UniRule"/>
</dbReference>
<dbReference type="GO" id="GO:0003735">
    <property type="term" value="F:structural constituent of ribosome"/>
    <property type="evidence" value="ECO:0007669"/>
    <property type="project" value="InterPro"/>
</dbReference>
<dbReference type="GO" id="GO:0006412">
    <property type="term" value="P:translation"/>
    <property type="evidence" value="ECO:0007669"/>
    <property type="project" value="UniProtKB-UniRule"/>
</dbReference>
<dbReference type="CDD" id="cd06089">
    <property type="entry name" value="KOW_RPL26"/>
    <property type="match status" value="1"/>
</dbReference>
<dbReference type="Gene3D" id="2.30.30.30">
    <property type="match status" value="1"/>
</dbReference>
<dbReference type="HAMAP" id="MF_01326_B">
    <property type="entry name" value="Ribosomal_uL24_B"/>
    <property type="match status" value="1"/>
</dbReference>
<dbReference type="InterPro" id="IPR005824">
    <property type="entry name" value="KOW"/>
</dbReference>
<dbReference type="InterPro" id="IPR014722">
    <property type="entry name" value="Rib_uL2_dom2"/>
</dbReference>
<dbReference type="InterPro" id="IPR003256">
    <property type="entry name" value="Ribosomal_uL24"/>
</dbReference>
<dbReference type="InterPro" id="IPR005825">
    <property type="entry name" value="Ribosomal_uL24_CS"/>
</dbReference>
<dbReference type="InterPro" id="IPR041988">
    <property type="entry name" value="Ribosomal_uL24_KOW"/>
</dbReference>
<dbReference type="InterPro" id="IPR008991">
    <property type="entry name" value="Translation_prot_SH3-like_sf"/>
</dbReference>
<dbReference type="NCBIfam" id="TIGR01079">
    <property type="entry name" value="rplX_bact"/>
    <property type="match status" value="1"/>
</dbReference>
<dbReference type="PANTHER" id="PTHR12903">
    <property type="entry name" value="MITOCHONDRIAL RIBOSOMAL PROTEIN L24"/>
    <property type="match status" value="1"/>
</dbReference>
<dbReference type="Pfam" id="PF00467">
    <property type="entry name" value="KOW"/>
    <property type="match status" value="1"/>
</dbReference>
<dbReference type="Pfam" id="PF17136">
    <property type="entry name" value="ribosomal_L24"/>
    <property type="match status" value="1"/>
</dbReference>
<dbReference type="SMART" id="SM00739">
    <property type="entry name" value="KOW"/>
    <property type="match status" value="1"/>
</dbReference>
<dbReference type="SUPFAM" id="SSF50104">
    <property type="entry name" value="Translation proteins SH3-like domain"/>
    <property type="match status" value="1"/>
</dbReference>
<dbReference type="PROSITE" id="PS01108">
    <property type="entry name" value="RIBOSOMAL_L24"/>
    <property type="match status" value="1"/>
</dbReference>
<gene>
    <name evidence="1" type="primary">rplX</name>
    <name type="ordered locus">A2cp1_2029</name>
</gene>
<accession>B8J871</accession>
<keyword id="KW-0687">Ribonucleoprotein</keyword>
<keyword id="KW-0689">Ribosomal protein</keyword>
<keyword id="KW-0694">RNA-binding</keyword>
<keyword id="KW-0699">rRNA-binding</keyword>
<sequence length="106" mass="11717">MAEIRKGDTVKVIAGKEKGKSGRVLEVLREDGRVRVEKLMTVKRHQKKGRSQANPEGGILEMAGTIAISSVMVVGKDEKPVRREKIGRELGAKEKARLQKRKTAAK</sequence>
<evidence type="ECO:0000255" key="1">
    <source>
        <dbReference type="HAMAP-Rule" id="MF_01326"/>
    </source>
</evidence>
<evidence type="ECO:0000256" key="2">
    <source>
        <dbReference type="SAM" id="MobiDB-lite"/>
    </source>
</evidence>
<evidence type="ECO:0000305" key="3"/>
<proteinExistence type="inferred from homology"/>
<organism>
    <name type="scientific">Anaeromyxobacter dehalogenans (strain 2CP-1 / ATCC BAA-258)</name>
    <dbReference type="NCBI Taxonomy" id="455488"/>
    <lineage>
        <taxon>Bacteria</taxon>
        <taxon>Pseudomonadati</taxon>
        <taxon>Myxococcota</taxon>
        <taxon>Myxococcia</taxon>
        <taxon>Myxococcales</taxon>
        <taxon>Cystobacterineae</taxon>
        <taxon>Anaeromyxobacteraceae</taxon>
        <taxon>Anaeromyxobacter</taxon>
    </lineage>
</organism>
<comment type="function">
    <text evidence="1">One of two assembly initiator proteins, it binds directly to the 5'-end of the 23S rRNA, where it nucleates assembly of the 50S subunit.</text>
</comment>
<comment type="function">
    <text evidence="1">One of the proteins that surrounds the polypeptide exit tunnel on the outside of the subunit.</text>
</comment>
<comment type="subunit">
    <text evidence="1">Part of the 50S ribosomal subunit.</text>
</comment>
<comment type="similarity">
    <text evidence="1">Belongs to the universal ribosomal protein uL24 family.</text>
</comment>
<reference key="1">
    <citation type="submission" date="2009-01" db="EMBL/GenBank/DDBJ databases">
        <title>Complete sequence of Anaeromyxobacter dehalogenans 2CP-1.</title>
        <authorList>
            <person name="Lucas S."/>
            <person name="Copeland A."/>
            <person name="Lapidus A."/>
            <person name="Glavina del Rio T."/>
            <person name="Dalin E."/>
            <person name="Tice H."/>
            <person name="Bruce D."/>
            <person name="Goodwin L."/>
            <person name="Pitluck S."/>
            <person name="Saunders E."/>
            <person name="Brettin T."/>
            <person name="Detter J.C."/>
            <person name="Han C."/>
            <person name="Larimer F."/>
            <person name="Land M."/>
            <person name="Hauser L."/>
            <person name="Kyrpides N."/>
            <person name="Ovchinnikova G."/>
            <person name="Beliaev A.S."/>
            <person name="Richardson P."/>
        </authorList>
    </citation>
    <scope>NUCLEOTIDE SEQUENCE [LARGE SCALE GENOMIC DNA]</scope>
    <source>
        <strain>2CP-1 / ATCC BAA-258</strain>
    </source>
</reference>
<protein>
    <recommendedName>
        <fullName evidence="1">Large ribosomal subunit protein uL24</fullName>
    </recommendedName>
    <alternativeName>
        <fullName evidence="3">50S ribosomal protein L24</fullName>
    </alternativeName>
</protein>
<feature type="chain" id="PRO_1000165920" description="Large ribosomal subunit protein uL24">
    <location>
        <begin position="1"/>
        <end position="106"/>
    </location>
</feature>
<feature type="region of interest" description="Disordered" evidence="2">
    <location>
        <begin position="84"/>
        <end position="106"/>
    </location>
</feature>
<feature type="compositionally biased region" description="Basic and acidic residues" evidence="2">
    <location>
        <begin position="84"/>
        <end position="97"/>
    </location>
</feature>
<name>RL24_ANAD2</name>